<evidence type="ECO:0000250" key="1">
    <source>
        <dbReference type="UniProtKB" id="Q9LPL6"/>
    </source>
</evidence>
<evidence type="ECO:0000255" key="2">
    <source>
        <dbReference type="PROSITE-ProRule" id="PRU00218"/>
    </source>
</evidence>
<evidence type="ECO:0000255" key="3">
    <source>
        <dbReference type="PROSITE-ProRule" id="PRU00373"/>
    </source>
</evidence>
<evidence type="ECO:0000256" key="4">
    <source>
        <dbReference type="SAM" id="MobiDB-lite"/>
    </source>
</evidence>
<evidence type="ECO:0000269" key="5">
    <source>
    </source>
</evidence>
<evidence type="ECO:0000269" key="6">
    <source>
    </source>
</evidence>
<evidence type="ECO:0000303" key="7">
    <source>
    </source>
</evidence>
<evidence type="ECO:0000303" key="8">
    <source>
    </source>
</evidence>
<evidence type="ECO:0000305" key="9"/>
<evidence type="ECO:0000305" key="10">
    <source>
    </source>
</evidence>
<evidence type="ECO:0000312" key="11">
    <source>
        <dbReference type="Araport" id="AT1G76970"/>
    </source>
</evidence>
<evidence type="ECO:0000312" key="12">
    <source>
        <dbReference type="EMBL" id="AAC00635.1"/>
    </source>
</evidence>
<evidence type="ECO:0000312" key="13">
    <source>
        <dbReference type="EMBL" id="AEE35914.1"/>
    </source>
</evidence>
<evidence type="ECO:0007744" key="14">
    <source>
    </source>
</evidence>
<evidence type="ECO:0007744" key="15">
    <source>
    </source>
</evidence>
<protein>
    <recommendedName>
        <fullName evidence="9">TOM1-like protein 4</fullName>
    </recommendedName>
</protein>
<proteinExistence type="evidence at protein level"/>
<feature type="chain" id="PRO_0000440679" description="TOM1-like protein 4">
    <location>
        <begin position="1"/>
        <end position="446"/>
    </location>
</feature>
<feature type="domain" description="VHS" evidence="2">
    <location>
        <begin position="12"/>
        <end position="141"/>
    </location>
</feature>
<feature type="domain" description="GAT" evidence="3">
    <location>
        <begin position="172"/>
        <end position="260"/>
    </location>
</feature>
<feature type="region of interest" description="Disordered" evidence="4">
    <location>
        <begin position="260"/>
        <end position="423"/>
    </location>
</feature>
<feature type="compositionally biased region" description="Acidic residues" evidence="4">
    <location>
        <begin position="284"/>
        <end position="293"/>
    </location>
</feature>
<feature type="compositionally biased region" description="Low complexity" evidence="4">
    <location>
        <begin position="347"/>
        <end position="361"/>
    </location>
</feature>
<feature type="compositionally biased region" description="Polar residues" evidence="4">
    <location>
        <begin position="400"/>
        <end position="413"/>
    </location>
</feature>
<feature type="compositionally biased region" description="Basic and acidic residues" evidence="4">
    <location>
        <begin position="414"/>
        <end position="423"/>
    </location>
</feature>
<feature type="modified residue" description="Phosphoserine" evidence="14 15">
    <location>
        <position position="291"/>
    </location>
</feature>
<feature type="modified residue" description="Phosphoserine" evidence="1">
    <location>
        <position position="366"/>
    </location>
</feature>
<gene>
    <name evidence="8" type="primary">TOL4</name>
    <name evidence="7" type="synonym">TOM1C</name>
    <name evidence="11" type="ordered locus">At1g76970</name>
    <name evidence="13" type="ORF">F22K20.7</name>
    <name evidence="12" type="ORF">F22K20_7</name>
</gene>
<reference key="1">
    <citation type="journal article" date="2000" name="Nature">
        <title>Sequence and analysis of chromosome 1 of the plant Arabidopsis thaliana.</title>
        <authorList>
            <person name="Theologis A."/>
            <person name="Ecker J.R."/>
            <person name="Palm C.J."/>
            <person name="Federspiel N.A."/>
            <person name="Kaul S."/>
            <person name="White O."/>
            <person name="Alonso J."/>
            <person name="Altafi H."/>
            <person name="Araujo R."/>
            <person name="Bowman C.L."/>
            <person name="Brooks S.Y."/>
            <person name="Buehler E."/>
            <person name="Chan A."/>
            <person name="Chao Q."/>
            <person name="Chen H."/>
            <person name="Cheuk R.F."/>
            <person name="Chin C.W."/>
            <person name="Chung M.K."/>
            <person name="Conn L."/>
            <person name="Conway A.B."/>
            <person name="Conway A.R."/>
            <person name="Creasy T.H."/>
            <person name="Dewar K."/>
            <person name="Dunn P."/>
            <person name="Etgu P."/>
            <person name="Feldblyum T.V."/>
            <person name="Feng J.-D."/>
            <person name="Fong B."/>
            <person name="Fujii C.Y."/>
            <person name="Gill J.E."/>
            <person name="Goldsmith A.D."/>
            <person name="Haas B."/>
            <person name="Hansen N.F."/>
            <person name="Hughes B."/>
            <person name="Huizar L."/>
            <person name="Hunter J.L."/>
            <person name="Jenkins J."/>
            <person name="Johnson-Hopson C."/>
            <person name="Khan S."/>
            <person name="Khaykin E."/>
            <person name="Kim C.J."/>
            <person name="Koo H.L."/>
            <person name="Kremenetskaia I."/>
            <person name="Kurtz D.B."/>
            <person name="Kwan A."/>
            <person name="Lam B."/>
            <person name="Langin-Hooper S."/>
            <person name="Lee A."/>
            <person name="Lee J.M."/>
            <person name="Lenz C.A."/>
            <person name="Li J.H."/>
            <person name="Li Y.-P."/>
            <person name="Lin X."/>
            <person name="Liu S.X."/>
            <person name="Liu Z.A."/>
            <person name="Luros J.S."/>
            <person name="Maiti R."/>
            <person name="Marziali A."/>
            <person name="Militscher J."/>
            <person name="Miranda M."/>
            <person name="Nguyen M."/>
            <person name="Nierman W.C."/>
            <person name="Osborne B.I."/>
            <person name="Pai G."/>
            <person name="Peterson J."/>
            <person name="Pham P.K."/>
            <person name="Rizzo M."/>
            <person name="Rooney T."/>
            <person name="Rowley D."/>
            <person name="Sakano H."/>
            <person name="Salzberg S.L."/>
            <person name="Schwartz J.R."/>
            <person name="Shinn P."/>
            <person name="Southwick A.M."/>
            <person name="Sun H."/>
            <person name="Tallon L.J."/>
            <person name="Tambunga G."/>
            <person name="Toriumi M.J."/>
            <person name="Town C.D."/>
            <person name="Utterback T."/>
            <person name="Van Aken S."/>
            <person name="Vaysberg M."/>
            <person name="Vysotskaia V.S."/>
            <person name="Walker M."/>
            <person name="Wu D."/>
            <person name="Yu G."/>
            <person name="Fraser C.M."/>
            <person name="Venter J.C."/>
            <person name="Davis R.W."/>
        </authorList>
    </citation>
    <scope>NUCLEOTIDE SEQUENCE [LARGE SCALE GENOMIC DNA]</scope>
    <source>
        <strain>cv. Columbia</strain>
    </source>
</reference>
<reference key="2">
    <citation type="journal article" date="2017" name="Plant J.">
        <title>Araport11: a complete reannotation of the Arabidopsis thaliana reference genome.</title>
        <authorList>
            <person name="Cheng C.Y."/>
            <person name="Krishnakumar V."/>
            <person name="Chan A.P."/>
            <person name="Thibaud-Nissen F."/>
            <person name="Schobel S."/>
            <person name="Town C.D."/>
        </authorList>
    </citation>
    <scope>GENOME REANNOTATION</scope>
    <source>
        <strain>cv. Columbia</strain>
    </source>
</reference>
<reference key="3">
    <citation type="journal article" date="2003" name="Science">
        <title>Empirical analysis of transcriptional activity in the Arabidopsis genome.</title>
        <authorList>
            <person name="Yamada K."/>
            <person name="Lim J."/>
            <person name="Dale J.M."/>
            <person name="Chen H."/>
            <person name="Shinn P."/>
            <person name="Palm C.J."/>
            <person name="Southwick A.M."/>
            <person name="Wu H.C."/>
            <person name="Kim C.J."/>
            <person name="Nguyen M."/>
            <person name="Pham P.K."/>
            <person name="Cheuk R.F."/>
            <person name="Karlin-Newmann G."/>
            <person name="Liu S.X."/>
            <person name="Lam B."/>
            <person name="Sakano H."/>
            <person name="Wu T."/>
            <person name="Yu G."/>
            <person name="Miranda M."/>
            <person name="Quach H.L."/>
            <person name="Tripp M."/>
            <person name="Chang C.H."/>
            <person name="Lee J.M."/>
            <person name="Toriumi M.J."/>
            <person name="Chan M.M."/>
            <person name="Tang C.C."/>
            <person name="Onodera C.S."/>
            <person name="Deng J.M."/>
            <person name="Akiyama K."/>
            <person name="Ansari Y."/>
            <person name="Arakawa T."/>
            <person name="Banh J."/>
            <person name="Banno F."/>
            <person name="Bowser L."/>
            <person name="Brooks S.Y."/>
            <person name="Carninci P."/>
            <person name="Chao Q."/>
            <person name="Choy N."/>
            <person name="Enju A."/>
            <person name="Goldsmith A.D."/>
            <person name="Gurjal M."/>
            <person name="Hansen N.F."/>
            <person name="Hayashizaki Y."/>
            <person name="Johnson-Hopson C."/>
            <person name="Hsuan V.W."/>
            <person name="Iida K."/>
            <person name="Karnes M."/>
            <person name="Khan S."/>
            <person name="Koesema E."/>
            <person name="Ishida J."/>
            <person name="Jiang P.X."/>
            <person name="Jones T."/>
            <person name="Kawai J."/>
            <person name="Kamiya A."/>
            <person name="Meyers C."/>
            <person name="Nakajima M."/>
            <person name="Narusaka M."/>
            <person name="Seki M."/>
            <person name="Sakurai T."/>
            <person name="Satou M."/>
            <person name="Tamse R."/>
            <person name="Vaysberg M."/>
            <person name="Wallender E.K."/>
            <person name="Wong C."/>
            <person name="Yamamura Y."/>
            <person name="Yuan S."/>
            <person name="Shinozaki K."/>
            <person name="Davis R.W."/>
            <person name="Theologis A."/>
            <person name="Ecker J.R."/>
        </authorList>
    </citation>
    <scope>NUCLEOTIDE SEQUENCE [LARGE SCALE MRNA]</scope>
    <source>
        <strain>cv. Columbia</strain>
    </source>
</reference>
<reference key="4">
    <citation type="submission" date="2005-03" db="EMBL/GenBank/DDBJ databases">
        <title>Large-scale analysis of RIKEN Arabidopsis full-length (RAFL) cDNAs.</title>
        <authorList>
            <person name="Totoki Y."/>
            <person name="Seki M."/>
            <person name="Ishida J."/>
            <person name="Nakajima M."/>
            <person name="Enju A."/>
            <person name="Kamiya A."/>
            <person name="Narusaka M."/>
            <person name="Shin-i T."/>
            <person name="Nakagawa M."/>
            <person name="Sakamoto N."/>
            <person name="Oishi K."/>
            <person name="Kohara Y."/>
            <person name="Kobayashi M."/>
            <person name="Toyoda A."/>
            <person name="Sakaki Y."/>
            <person name="Sakurai T."/>
            <person name="Iida K."/>
            <person name="Akiyama K."/>
            <person name="Satou M."/>
            <person name="Toyoda T."/>
            <person name="Konagaya A."/>
            <person name="Carninci P."/>
            <person name="Kawai J."/>
            <person name="Hayashizaki Y."/>
            <person name="Shinozaki K."/>
        </authorList>
    </citation>
    <scope>NUCLEOTIDE SEQUENCE [LARGE SCALE MRNA]</scope>
    <source>
        <strain>cv. Columbia</strain>
    </source>
</reference>
<reference key="5">
    <citation type="journal article" date="2006" name="Trends Plant Sci.">
        <title>Exploring the ESCRTing machinery in eukaryotes.</title>
        <authorList>
            <person name="Winter V."/>
            <person name="Hauser M.-T."/>
        </authorList>
    </citation>
    <scope>GENE FAMILY</scope>
    <scope>REVIEW</scope>
</reference>
<reference key="6">
    <citation type="journal article" date="2009" name="J. Proteomics">
        <title>Phosphoproteomic analysis of nuclei-enriched fractions from Arabidopsis thaliana.</title>
        <authorList>
            <person name="Jones A.M.E."/>
            <person name="MacLean D."/>
            <person name="Studholme D.J."/>
            <person name="Serna-Sanz A."/>
            <person name="Andreasson E."/>
            <person name="Rathjen J.P."/>
            <person name="Peck S.C."/>
        </authorList>
    </citation>
    <scope>PHOSPHORYLATION [LARGE SCALE ANALYSIS] AT SER-291</scope>
    <scope>IDENTIFICATION BY MASS SPECTROMETRY [LARGE SCALE ANALYSIS]</scope>
    <source>
        <strain>cv. Columbia</strain>
    </source>
</reference>
<reference key="7">
    <citation type="journal article" date="2009" name="Plant Physiol.">
        <title>Large-scale Arabidopsis phosphoproteome profiling reveals novel chloroplast kinase substrates and phosphorylation networks.</title>
        <authorList>
            <person name="Reiland S."/>
            <person name="Messerli G."/>
            <person name="Baerenfaller K."/>
            <person name="Gerrits B."/>
            <person name="Endler A."/>
            <person name="Grossmann J."/>
            <person name="Gruissem W."/>
            <person name="Baginsky S."/>
        </authorList>
    </citation>
    <scope>PHOSPHORYLATION [LARGE SCALE ANALYSIS] AT SER-291</scope>
    <scope>IDENTIFICATION BY MASS SPECTROMETRY [LARGE SCALE ANALYSIS]</scope>
</reference>
<reference key="8">
    <citation type="journal article" date="2011" name="Front. Plant Sci.">
        <title>Protein-protein interaction network and subcellular localization of the Arabidopsis thaliana ESCRT machinery.</title>
        <authorList>
            <person name="Richardson L.G."/>
            <person name="Howard A.S."/>
            <person name="Khuu N."/>
            <person name="Gidda S.K."/>
            <person name="McCartney A."/>
            <person name="Morphy B.J."/>
            <person name="Mullen R.T."/>
        </authorList>
    </citation>
    <scope>GENE FAMILY</scope>
    <scope>NOMENCLATURE</scope>
    <scope>SUBCELLULAR LOCATION</scope>
</reference>
<reference key="9">
    <citation type="journal article" date="2013" name="Curr. Biol.">
        <title>Arabidopsis TOL proteins act as gatekeepers for vacuolar sorting of PIN2 plasma membrane protein.</title>
        <authorList>
            <person name="Korbei B."/>
            <person name="Moulinier-Anzola J."/>
            <person name="De-Araujo L."/>
            <person name="Lucyshyn D."/>
            <person name="Retzer K."/>
            <person name="Khan M.A."/>
            <person name="Luschnig C."/>
        </authorList>
    </citation>
    <scope>GENE FAMILY</scope>
    <scope>NOMENCLATURE</scope>
</reference>
<reference key="10">
    <citation type="journal article" date="2014" name="Plant Signal. Behav.">
        <title>Expression of Arabidopsis TOL genes.</title>
        <authorList>
            <person name="Moulinier-Anzola J."/>
            <person name="De-Araujo L."/>
            <person name="Korbei B."/>
        </authorList>
    </citation>
    <scope>TISSUE SPECIFICITY</scope>
</reference>
<sequence length="446" mass="49255">MANDAAACAERATNDMLIGPDWAINIELCDLINMDPSQAKEAVKVLKKRLGSKNSKVQILALYALETLSKNCGENVYQLIIDRGLLNDMVKIVKKKPELNVREKILTLLDTWQEAFGGRGGRYPQYYNAYNDLRSAGIEFPPRTESSLSFFTPPQTQPDEDAAIQASLQGDDASSLSLEEIQSAEGSVDVLMDMLGAHDPGNPESLKEEVIVDLVEQCRTYQRRVMTLVNTTTDEELLCQGLALNDNLQHVLQRHDDIANVGSVPSNGRNTRAPPPVQIVDINHDDEDDESDDEFARLAHRSSTPTRRPVHGSDSGMVDILSGDVYKPQGNSSSQGVKKPPPPPPHTSSSSSSPVFDDASPQQSKSSEVIRNLPPPPSRHNQRQQFFEHHHSSSGSDSSYEGQTRNLSLTSSEPQKEEKPEDLLFKDLVEFAKTRSSKANNNNRSL</sequence>
<keyword id="KW-0025">Alternative splicing</keyword>
<keyword id="KW-0963">Cytoplasm</keyword>
<keyword id="KW-0472">Membrane</keyword>
<keyword id="KW-0597">Phosphoprotein</keyword>
<keyword id="KW-0653">Protein transport</keyword>
<keyword id="KW-1185">Reference proteome</keyword>
<keyword id="KW-0813">Transport</keyword>
<dbReference type="EMBL" id="AC002291">
    <property type="protein sequence ID" value="AAC00635.1"/>
    <property type="status" value="ALT_SEQ"/>
    <property type="molecule type" value="Genomic_DNA"/>
</dbReference>
<dbReference type="EMBL" id="CP002684">
    <property type="protein sequence ID" value="AEE35914.1"/>
    <property type="molecule type" value="Genomic_DNA"/>
</dbReference>
<dbReference type="EMBL" id="CP002684">
    <property type="protein sequence ID" value="ANM58921.1"/>
    <property type="molecule type" value="Genomic_DNA"/>
</dbReference>
<dbReference type="EMBL" id="CP002684">
    <property type="protein sequence ID" value="ANM58923.1"/>
    <property type="molecule type" value="Genomic_DNA"/>
</dbReference>
<dbReference type="EMBL" id="CP002684">
    <property type="protein sequence ID" value="ANM58925.1"/>
    <property type="molecule type" value="Genomic_DNA"/>
</dbReference>
<dbReference type="EMBL" id="BT010453">
    <property type="protein sequence ID" value="AAQ62873.1"/>
    <property type="molecule type" value="mRNA"/>
</dbReference>
<dbReference type="EMBL" id="AK221351">
    <property type="protein sequence ID" value="BAD94203.1"/>
    <property type="molecule type" value="mRNA"/>
</dbReference>
<dbReference type="PIR" id="F96798">
    <property type="entry name" value="F96798"/>
</dbReference>
<dbReference type="RefSeq" id="NP_001321321.1">
    <molecule id="Q6NQK0-1"/>
    <property type="nucleotide sequence ID" value="NM_001334752.1"/>
</dbReference>
<dbReference type="RefSeq" id="NP_001321323.1">
    <molecule id="Q6NQK0-1"/>
    <property type="nucleotide sequence ID" value="NM_001334755.1"/>
</dbReference>
<dbReference type="RefSeq" id="NP_001321325.1">
    <molecule id="Q6NQK0-1"/>
    <property type="nucleotide sequence ID" value="NM_001334751.1"/>
</dbReference>
<dbReference type="RefSeq" id="NP_177823.2">
    <molecule id="Q6NQK0-1"/>
    <property type="nucleotide sequence ID" value="NM_106348.4"/>
</dbReference>
<dbReference type="SMR" id="Q6NQK0"/>
<dbReference type="FunCoup" id="Q6NQK0">
    <property type="interactions" value="2426"/>
</dbReference>
<dbReference type="STRING" id="3702.Q6NQK0"/>
<dbReference type="iPTMnet" id="Q6NQK0"/>
<dbReference type="PaxDb" id="3702-AT1G76970.1"/>
<dbReference type="ProteomicsDB" id="234453">
    <molecule id="Q6NQK0-1"/>
</dbReference>
<dbReference type="EnsemblPlants" id="AT1G76970.1">
    <molecule id="Q6NQK0-1"/>
    <property type="protein sequence ID" value="AT1G76970.1"/>
    <property type="gene ID" value="AT1G76970"/>
</dbReference>
<dbReference type="EnsemblPlants" id="AT1G76970.2">
    <molecule id="Q6NQK0-1"/>
    <property type="protein sequence ID" value="AT1G76970.2"/>
    <property type="gene ID" value="AT1G76970"/>
</dbReference>
<dbReference type="EnsemblPlants" id="AT1G76970.3">
    <molecule id="Q6NQK0-1"/>
    <property type="protein sequence ID" value="AT1G76970.3"/>
    <property type="gene ID" value="AT1G76970"/>
</dbReference>
<dbReference type="EnsemblPlants" id="AT1G76970.6">
    <molecule id="Q6NQK0-1"/>
    <property type="protein sequence ID" value="AT1G76970.6"/>
    <property type="gene ID" value="AT1G76970"/>
</dbReference>
<dbReference type="GeneID" id="844033"/>
<dbReference type="Gramene" id="AT1G76970.1">
    <molecule id="Q6NQK0-1"/>
    <property type="protein sequence ID" value="AT1G76970.1"/>
    <property type="gene ID" value="AT1G76970"/>
</dbReference>
<dbReference type="Gramene" id="AT1G76970.2">
    <molecule id="Q6NQK0-1"/>
    <property type="protein sequence ID" value="AT1G76970.2"/>
    <property type="gene ID" value="AT1G76970"/>
</dbReference>
<dbReference type="Gramene" id="AT1G76970.3">
    <molecule id="Q6NQK0-1"/>
    <property type="protein sequence ID" value="AT1G76970.3"/>
    <property type="gene ID" value="AT1G76970"/>
</dbReference>
<dbReference type="Gramene" id="AT1G76970.6">
    <molecule id="Q6NQK0-1"/>
    <property type="protein sequence ID" value="AT1G76970.6"/>
    <property type="gene ID" value="AT1G76970"/>
</dbReference>
<dbReference type="KEGG" id="ath:AT1G76970"/>
<dbReference type="Araport" id="AT1G76970"/>
<dbReference type="TAIR" id="AT1G76970"/>
<dbReference type="eggNOG" id="KOG1087">
    <property type="taxonomic scope" value="Eukaryota"/>
</dbReference>
<dbReference type="HOGENOM" id="CLU_026748_2_1_1"/>
<dbReference type="InParanoid" id="Q6NQK0"/>
<dbReference type="OMA" id="NCEEDEM"/>
<dbReference type="PhylomeDB" id="Q6NQK0"/>
<dbReference type="PRO" id="PR:Q6NQK0"/>
<dbReference type="Proteomes" id="UP000006548">
    <property type="component" value="Chromosome 1"/>
</dbReference>
<dbReference type="ExpressionAtlas" id="Q6NQK0">
    <property type="expression patterns" value="baseline and differential"/>
</dbReference>
<dbReference type="GO" id="GO:0005737">
    <property type="term" value="C:cytoplasm"/>
    <property type="evidence" value="ECO:0000314"/>
    <property type="project" value="UniProtKB"/>
</dbReference>
<dbReference type="GO" id="GO:0016020">
    <property type="term" value="C:membrane"/>
    <property type="evidence" value="ECO:0007669"/>
    <property type="project" value="UniProtKB-SubCell"/>
</dbReference>
<dbReference type="GO" id="GO:0035091">
    <property type="term" value="F:phosphatidylinositol binding"/>
    <property type="evidence" value="ECO:0007669"/>
    <property type="project" value="InterPro"/>
</dbReference>
<dbReference type="GO" id="GO:0043130">
    <property type="term" value="F:ubiquitin binding"/>
    <property type="evidence" value="ECO:0007669"/>
    <property type="project" value="InterPro"/>
</dbReference>
<dbReference type="GO" id="GO:0043328">
    <property type="term" value="P:protein transport to vacuole involved in ubiquitin-dependent protein catabolic process via the multivesicular body sorting pathway"/>
    <property type="evidence" value="ECO:0007669"/>
    <property type="project" value="InterPro"/>
</dbReference>
<dbReference type="CDD" id="cd14231">
    <property type="entry name" value="GAT_GGA-like_plant"/>
    <property type="match status" value="1"/>
</dbReference>
<dbReference type="CDD" id="cd03561">
    <property type="entry name" value="VHS"/>
    <property type="match status" value="1"/>
</dbReference>
<dbReference type="FunFam" id="1.25.40.90:FF:000028">
    <property type="entry name" value="TOM1-like protein 2"/>
    <property type="match status" value="1"/>
</dbReference>
<dbReference type="Gene3D" id="1.20.58.160">
    <property type="match status" value="1"/>
</dbReference>
<dbReference type="Gene3D" id="1.25.40.90">
    <property type="match status" value="1"/>
</dbReference>
<dbReference type="InterPro" id="IPR008942">
    <property type="entry name" value="ENTH_VHS"/>
</dbReference>
<dbReference type="InterPro" id="IPR004152">
    <property type="entry name" value="GAT_dom"/>
</dbReference>
<dbReference type="InterPro" id="IPR038425">
    <property type="entry name" value="GAT_sf"/>
</dbReference>
<dbReference type="InterPro" id="IPR044836">
    <property type="entry name" value="TOL_plant"/>
</dbReference>
<dbReference type="InterPro" id="IPR014645">
    <property type="entry name" value="TOM1"/>
</dbReference>
<dbReference type="InterPro" id="IPR002014">
    <property type="entry name" value="VHS_dom"/>
</dbReference>
<dbReference type="PANTHER" id="PTHR45898">
    <property type="entry name" value="TOM1-LIKE PROTEIN"/>
    <property type="match status" value="1"/>
</dbReference>
<dbReference type="PANTHER" id="PTHR45898:SF14">
    <property type="entry name" value="TOM1-LIKE PROTEIN 4"/>
    <property type="match status" value="1"/>
</dbReference>
<dbReference type="Pfam" id="PF03127">
    <property type="entry name" value="GAT"/>
    <property type="match status" value="1"/>
</dbReference>
<dbReference type="Pfam" id="PF00790">
    <property type="entry name" value="VHS"/>
    <property type="match status" value="1"/>
</dbReference>
<dbReference type="PIRSF" id="PIRSF036948">
    <property type="entry name" value="TOM1"/>
    <property type="match status" value="1"/>
</dbReference>
<dbReference type="SMART" id="SM00288">
    <property type="entry name" value="VHS"/>
    <property type="match status" value="1"/>
</dbReference>
<dbReference type="SUPFAM" id="SSF48464">
    <property type="entry name" value="ENTH/VHS domain"/>
    <property type="match status" value="1"/>
</dbReference>
<dbReference type="SUPFAM" id="SSF89009">
    <property type="entry name" value="GAT-like domain"/>
    <property type="match status" value="1"/>
</dbReference>
<dbReference type="PROSITE" id="PS50909">
    <property type="entry name" value="GAT"/>
    <property type="match status" value="1"/>
</dbReference>
<dbReference type="PROSITE" id="PS50179">
    <property type="entry name" value="VHS"/>
    <property type="match status" value="1"/>
</dbReference>
<name>TOL4_ARATH</name>
<accession>Q6NQK0</accession>
<accession>O49283</accession>
<organism>
    <name type="scientific">Arabidopsis thaliana</name>
    <name type="common">Mouse-ear cress</name>
    <dbReference type="NCBI Taxonomy" id="3702"/>
    <lineage>
        <taxon>Eukaryota</taxon>
        <taxon>Viridiplantae</taxon>
        <taxon>Streptophyta</taxon>
        <taxon>Embryophyta</taxon>
        <taxon>Tracheophyta</taxon>
        <taxon>Spermatophyta</taxon>
        <taxon>Magnoliopsida</taxon>
        <taxon>eudicotyledons</taxon>
        <taxon>Gunneridae</taxon>
        <taxon>Pentapetalae</taxon>
        <taxon>rosids</taxon>
        <taxon>malvids</taxon>
        <taxon>Brassicales</taxon>
        <taxon>Brassicaceae</taxon>
        <taxon>Camelineae</taxon>
        <taxon>Arabidopsis</taxon>
    </lineage>
</organism>
<comment type="function">
    <text evidence="10">Might contribute to the loading of the ESCRT machinery.</text>
</comment>
<comment type="subcellular location">
    <subcellularLocation>
        <location evidence="5">Cytoplasm</location>
    </subcellularLocation>
    <subcellularLocation>
        <location evidence="9">Membrane</location>
        <topology evidence="9">Peripheral membrane protein</topology>
    </subcellularLocation>
</comment>
<comment type="alternative products">
    <event type="alternative splicing"/>
    <isoform>
        <id>Q6NQK0-1</id>
        <name>1</name>
        <sequence type="displayed"/>
    </isoform>
    <text evidence="9">Additional isoforms seem to exist.</text>
</comment>
<comment type="tissue specificity">
    <text evidence="6">Ubiquitously expressed.</text>
</comment>
<comment type="similarity">
    <text evidence="9">Belongs to the TOM1 family.</text>
</comment>
<comment type="sequence caution" evidence="9">
    <conflict type="erroneous gene model prediction">
        <sequence resource="EMBL-CDS" id="AAC00635"/>
    </conflict>
</comment>